<organism>
    <name type="scientific">Plasmodium falciparum (isolate 3D7)</name>
    <dbReference type="NCBI Taxonomy" id="36329"/>
    <lineage>
        <taxon>Eukaryota</taxon>
        <taxon>Sar</taxon>
        <taxon>Alveolata</taxon>
        <taxon>Apicomplexa</taxon>
        <taxon>Aconoidasida</taxon>
        <taxon>Haemosporida</taxon>
        <taxon>Plasmodiidae</taxon>
        <taxon>Plasmodium</taxon>
        <taxon>Plasmodium (Laverania)</taxon>
    </lineage>
</organism>
<sequence length="355" mass="43053">MYNFVKIFQSNFIDINKLSKFEIFLKTIFRIYSSPGRTHLLAHAADISAKYAVRKIYEYMRTDEEGIRILKEKPLLIRQDICFNELKKLPKNTLGYKYMEFLETYKLHAHDREVSHFIKDINESYILTRYRQIHDIAHVVYNLNISIEAEAALKLIELIQTKLPITLLAILIAPFMTPLYRFQYIFEHNIPSNFLCPNFDYTYNDDYNYIDEMSLKQYEYYLTDYFHVEKRESQSFYYKLYKYYFDNLNNSSHVRGSIIYGYQNKNYNDIHYDKLNNEYLYLKNNIKNYFHFQYKPRKLLLTNLYPWAYKTAIQTNKPLHSIYVEKWFDKDIDLFRKKYNITPLPSNLNLMAGIN</sequence>
<comment type="function">
    <text evidence="1">Lyase that catalyzes the C1-decarboxylation of 4-hydroxy-3-methoxy-5-(all-trans-polyprenyl)benzoic acid into 2-methoxy-6-(all-trans-polyprenyl)phenol during ubiquinone biosynthesis.</text>
</comment>
<comment type="catalytic activity">
    <reaction evidence="1">
        <text>a 4-hydroxy-3-methoxy-5-(all-trans-polyprenyl)benzoate + H(+) = a 2-methoxy-6-(all-trans-polyprenyl)phenol + CO2</text>
        <dbReference type="Rhea" id="RHEA:81179"/>
        <dbReference type="Rhea" id="RHEA-COMP:9551"/>
        <dbReference type="Rhea" id="RHEA-COMP:10931"/>
        <dbReference type="ChEBI" id="CHEBI:15378"/>
        <dbReference type="ChEBI" id="CHEBI:16526"/>
        <dbReference type="ChEBI" id="CHEBI:62731"/>
        <dbReference type="ChEBI" id="CHEBI:84443"/>
        <dbReference type="EC" id="4.1.1.130"/>
    </reaction>
</comment>
<comment type="cofactor">
    <cofactor evidence="1">
        <name>Zn(2+)</name>
        <dbReference type="ChEBI" id="CHEBI:29105"/>
    </cofactor>
</comment>
<comment type="pathway">
    <text evidence="1">Cofactor biosynthesis; ubiquinone biosynthesis.</text>
</comment>
<comment type="subunit">
    <text evidence="1">Component of a multi-subunit COQ enzyme complex.</text>
</comment>
<comment type="subcellular location">
    <subcellularLocation>
        <location evidence="1">Mitochondrion inner membrane</location>
        <topology evidence="1">Peripheral membrane protein</topology>
        <orientation evidence="1">Matrix side</orientation>
    </subcellularLocation>
</comment>
<comment type="miscellaneous">
    <text evidence="1">This protein may be expected to contain an N-terminal transit peptide but none has been predicted.</text>
</comment>
<comment type="similarity">
    <text evidence="1">Belongs to the COQ4 family.</text>
</comment>
<accession>Q8IIP1</accession>
<accession>A0A143ZYI5</accession>
<reference key="1">
    <citation type="journal article" date="2002" name="Nature">
        <title>Genome sequence of the human malaria parasite Plasmodium falciparum.</title>
        <authorList>
            <person name="Gardner M.J."/>
            <person name="Hall N."/>
            <person name="Fung E."/>
            <person name="White O."/>
            <person name="Berriman M."/>
            <person name="Hyman R.W."/>
            <person name="Carlton J.M."/>
            <person name="Pain A."/>
            <person name="Nelson K.E."/>
            <person name="Bowman S."/>
            <person name="Paulsen I.T."/>
            <person name="James K.D."/>
            <person name="Eisen J.A."/>
            <person name="Rutherford K.M."/>
            <person name="Salzberg S.L."/>
            <person name="Craig A."/>
            <person name="Kyes S."/>
            <person name="Chan M.-S."/>
            <person name="Nene V."/>
            <person name="Shallom S.J."/>
            <person name="Suh B."/>
            <person name="Peterson J."/>
            <person name="Angiuoli S."/>
            <person name="Pertea M."/>
            <person name="Allen J."/>
            <person name="Selengut J."/>
            <person name="Haft D."/>
            <person name="Mather M.W."/>
            <person name="Vaidya A.B."/>
            <person name="Martin D.M.A."/>
            <person name="Fairlamb A.H."/>
            <person name="Fraunholz M.J."/>
            <person name="Roos D.S."/>
            <person name="Ralph S.A."/>
            <person name="McFadden G.I."/>
            <person name="Cummings L.M."/>
            <person name="Subramanian G.M."/>
            <person name="Mungall C."/>
            <person name="Venter J.C."/>
            <person name="Carucci D.J."/>
            <person name="Hoffman S.L."/>
            <person name="Newbold C."/>
            <person name="Davis R.W."/>
            <person name="Fraser C.M."/>
            <person name="Barrell B.G."/>
        </authorList>
    </citation>
    <scope>NUCLEOTIDE SEQUENCE [LARGE SCALE GENOMIC DNA]</scope>
    <source>
        <strain>3D7</strain>
    </source>
</reference>
<protein>
    <recommendedName>
        <fullName evidence="1">Ubiquinone biosynthesis protein COQ4 homolog, mitochondrial</fullName>
    </recommendedName>
    <alternativeName>
        <fullName>4-hydroxy-3-methoxy-5-polyprenylbenzoate decarboxylase</fullName>
        <ecNumber evidence="1">4.1.1.130</ecNumber>
    </alternativeName>
    <alternativeName>
        <fullName evidence="1">Coenzyme Q biosynthesis protein 4 homolog</fullName>
    </alternativeName>
</protein>
<feature type="chain" id="PRO_0000388079" description="Ubiquinone biosynthesis protein COQ4 homolog, mitochondrial">
    <location>
        <begin position="1"/>
        <end position="355"/>
    </location>
</feature>
<feature type="binding site" evidence="1">
    <location>
        <position position="134"/>
    </location>
    <ligand>
        <name>Zn(2+)</name>
        <dbReference type="ChEBI" id="CHEBI:29105"/>
    </ligand>
</feature>
<feature type="binding site" evidence="1">
    <location>
        <position position="135"/>
    </location>
    <ligand>
        <name>Zn(2+)</name>
        <dbReference type="ChEBI" id="CHEBI:29105"/>
    </ligand>
</feature>
<feature type="binding site" evidence="1">
    <location>
        <position position="138"/>
    </location>
    <ligand>
        <name>Zn(2+)</name>
        <dbReference type="ChEBI" id="CHEBI:29105"/>
    </ligand>
</feature>
<feature type="binding site" evidence="1">
    <location>
        <position position="150"/>
    </location>
    <ligand>
        <name>Zn(2+)</name>
        <dbReference type="ChEBI" id="CHEBI:29105"/>
    </ligand>
</feature>
<proteinExistence type="inferred from homology"/>
<gene>
    <name evidence="2" type="primary">COQ4</name>
    <name type="ORF">PF11_0128</name>
    <name type="ORF">PF3D7_1112200</name>
</gene>
<name>COQ4_PLAF7</name>
<keyword id="KW-0456">Lyase</keyword>
<keyword id="KW-0472">Membrane</keyword>
<keyword id="KW-0479">Metal-binding</keyword>
<keyword id="KW-0496">Mitochondrion</keyword>
<keyword id="KW-0999">Mitochondrion inner membrane</keyword>
<keyword id="KW-1185">Reference proteome</keyword>
<keyword id="KW-0831">Ubiquinone biosynthesis</keyword>
<keyword id="KW-0862">Zinc</keyword>
<evidence type="ECO:0000255" key="1">
    <source>
        <dbReference type="HAMAP-Rule" id="MF_03111"/>
    </source>
</evidence>
<evidence type="ECO:0000305" key="2"/>
<dbReference type="EC" id="4.1.1.130" evidence="1"/>
<dbReference type="EMBL" id="LN999945">
    <property type="protein sequence ID" value="CZT98782.1"/>
    <property type="molecule type" value="Genomic_DNA"/>
</dbReference>
<dbReference type="RefSeq" id="XP_001347800.1">
    <property type="nucleotide sequence ID" value="XM_001347764.1"/>
</dbReference>
<dbReference type="STRING" id="36329.Q8IIP1"/>
<dbReference type="PaxDb" id="5833-PF11_0128"/>
<dbReference type="EnsemblProtists" id="CZT98782">
    <property type="protein sequence ID" value="CZT98782"/>
    <property type="gene ID" value="PF3D7_1112200"/>
</dbReference>
<dbReference type="GeneID" id="810676"/>
<dbReference type="KEGG" id="pfa:PF3D7_1112200"/>
<dbReference type="VEuPathDB" id="PlasmoDB:PF3D7_1112200"/>
<dbReference type="HOGENOM" id="CLU_781859_0_0_1"/>
<dbReference type="InParanoid" id="Q8IIP1"/>
<dbReference type="OMA" id="QIHDIGH"/>
<dbReference type="OrthoDB" id="4249at2759"/>
<dbReference type="PhylomeDB" id="Q8IIP1"/>
<dbReference type="UniPathway" id="UPA00232"/>
<dbReference type="Proteomes" id="UP000001450">
    <property type="component" value="Chromosome 11"/>
</dbReference>
<dbReference type="GO" id="GO:0031314">
    <property type="term" value="C:extrinsic component of mitochondrial inner membrane"/>
    <property type="evidence" value="ECO:0007669"/>
    <property type="project" value="UniProtKB-UniRule"/>
</dbReference>
<dbReference type="GO" id="GO:0006744">
    <property type="term" value="P:ubiquinone biosynthetic process"/>
    <property type="evidence" value="ECO:0007669"/>
    <property type="project" value="UniProtKB-UniRule"/>
</dbReference>
<dbReference type="HAMAP" id="MF_03111">
    <property type="entry name" value="Coq4"/>
    <property type="match status" value="1"/>
</dbReference>
<dbReference type="InterPro" id="IPR007715">
    <property type="entry name" value="Coq4"/>
</dbReference>
<dbReference type="InterPro" id="IPR027540">
    <property type="entry name" value="Coq4_euk"/>
</dbReference>
<dbReference type="PANTHER" id="PTHR12922">
    <property type="entry name" value="UBIQUINONE BIOSYNTHESIS PROTEIN"/>
    <property type="match status" value="1"/>
</dbReference>
<dbReference type="PANTHER" id="PTHR12922:SF7">
    <property type="entry name" value="UBIQUINONE BIOSYNTHESIS PROTEIN COQ4 HOMOLOG, MITOCHONDRIAL"/>
    <property type="match status" value="1"/>
</dbReference>
<dbReference type="Pfam" id="PF05019">
    <property type="entry name" value="Coq4"/>
    <property type="match status" value="2"/>
</dbReference>